<evidence type="ECO:0000255" key="1">
    <source>
        <dbReference type="HAMAP-Rule" id="MF_01366"/>
    </source>
</evidence>
<evidence type="ECO:0000305" key="2"/>
<reference key="1">
    <citation type="submission" date="2008-02" db="EMBL/GenBank/DDBJ databases">
        <title>Complete sequence of chromosome 1 of Burkholderia cenocepacia MC0-3.</title>
        <authorList>
            <person name="Copeland A."/>
            <person name="Lucas S."/>
            <person name="Lapidus A."/>
            <person name="Barry K."/>
            <person name="Bruce D."/>
            <person name="Goodwin L."/>
            <person name="Glavina del Rio T."/>
            <person name="Dalin E."/>
            <person name="Tice H."/>
            <person name="Pitluck S."/>
            <person name="Chain P."/>
            <person name="Malfatti S."/>
            <person name="Shin M."/>
            <person name="Vergez L."/>
            <person name="Schmutz J."/>
            <person name="Larimer F."/>
            <person name="Land M."/>
            <person name="Hauser L."/>
            <person name="Kyrpides N."/>
            <person name="Mikhailova N."/>
            <person name="Tiedje J."/>
            <person name="Richardson P."/>
        </authorList>
    </citation>
    <scope>NUCLEOTIDE SEQUENCE [LARGE SCALE GENOMIC DNA]</scope>
    <source>
        <strain>MC0-3</strain>
    </source>
</reference>
<accession>B1JVU4</accession>
<sequence>MKTFSAKAHEVTREWYVIDATDKVLGRVASEVARRLRGKHKPEFTPHVDTGDFIIIINASKLKVTGNKTLDKKYYRHSGYPGGIYETTFGKMQERFPGRALEKAVKGMLPKGPLGYAMIKKLKVYAEATHPHSAQQPKALEI</sequence>
<proteinExistence type="inferred from homology"/>
<dbReference type="EMBL" id="CP000958">
    <property type="protein sequence ID" value="ACA89824.1"/>
    <property type="molecule type" value="Genomic_DNA"/>
</dbReference>
<dbReference type="RefSeq" id="WP_009687896.1">
    <property type="nucleotide sequence ID" value="NC_010508.1"/>
</dbReference>
<dbReference type="SMR" id="B1JVU4"/>
<dbReference type="GeneID" id="98106480"/>
<dbReference type="KEGG" id="bcm:Bcenmc03_0646"/>
<dbReference type="HOGENOM" id="CLU_082184_2_2_4"/>
<dbReference type="Proteomes" id="UP000002169">
    <property type="component" value="Chromosome 1"/>
</dbReference>
<dbReference type="GO" id="GO:0022625">
    <property type="term" value="C:cytosolic large ribosomal subunit"/>
    <property type="evidence" value="ECO:0007669"/>
    <property type="project" value="TreeGrafter"/>
</dbReference>
<dbReference type="GO" id="GO:0003729">
    <property type="term" value="F:mRNA binding"/>
    <property type="evidence" value="ECO:0007669"/>
    <property type="project" value="TreeGrafter"/>
</dbReference>
<dbReference type="GO" id="GO:0003735">
    <property type="term" value="F:structural constituent of ribosome"/>
    <property type="evidence" value="ECO:0007669"/>
    <property type="project" value="InterPro"/>
</dbReference>
<dbReference type="GO" id="GO:0017148">
    <property type="term" value="P:negative regulation of translation"/>
    <property type="evidence" value="ECO:0007669"/>
    <property type="project" value="TreeGrafter"/>
</dbReference>
<dbReference type="GO" id="GO:0006412">
    <property type="term" value="P:translation"/>
    <property type="evidence" value="ECO:0007669"/>
    <property type="project" value="UniProtKB-UniRule"/>
</dbReference>
<dbReference type="CDD" id="cd00392">
    <property type="entry name" value="Ribosomal_L13"/>
    <property type="match status" value="1"/>
</dbReference>
<dbReference type="FunFam" id="3.90.1180.10:FF:000001">
    <property type="entry name" value="50S ribosomal protein L13"/>
    <property type="match status" value="1"/>
</dbReference>
<dbReference type="Gene3D" id="3.90.1180.10">
    <property type="entry name" value="Ribosomal protein L13"/>
    <property type="match status" value="1"/>
</dbReference>
<dbReference type="HAMAP" id="MF_01366">
    <property type="entry name" value="Ribosomal_uL13"/>
    <property type="match status" value="1"/>
</dbReference>
<dbReference type="InterPro" id="IPR005822">
    <property type="entry name" value="Ribosomal_uL13"/>
</dbReference>
<dbReference type="InterPro" id="IPR005823">
    <property type="entry name" value="Ribosomal_uL13_bac-type"/>
</dbReference>
<dbReference type="InterPro" id="IPR036899">
    <property type="entry name" value="Ribosomal_uL13_sf"/>
</dbReference>
<dbReference type="NCBIfam" id="TIGR01066">
    <property type="entry name" value="rplM_bact"/>
    <property type="match status" value="1"/>
</dbReference>
<dbReference type="PANTHER" id="PTHR11545:SF2">
    <property type="entry name" value="LARGE RIBOSOMAL SUBUNIT PROTEIN UL13M"/>
    <property type="match status" value="1"/>
</dbReference>
<dbReference type="PANTHER" id="PTHR11545">
    <property type="entry name" value="RIBOSOMAL PROTEIN L13"/>
    <property type="match status" value="1"/>
</dbReference>
<dbReference type="Pfam" id="PF00572">
    <property type="entry name" value="Ribosomal_L13"/>
    <property type="match status" value="1"/>
</dbReference>
<dbReference type="PIRSF" id="PIRSF002181">
    <property type="entry name" value="Ribosomal_L13"/>
    <property type="match status" value="1"/>
</dbReference>
<dbReference type="SUPFAM" id="SSF52161">
    <property type="entry name" value="Ribosomal protein L13"/>
    <property type="match status" value="1"/>
</dbReference>
<name>RL13_BURO0</name>
<protein>
    <recommendedName>
        <fullName evidence="1">Large ribosomal subunit protein uL13</fullName>
    </recommendedName>
    <alternativeName>
        <fullName evidence="2">50S ribosomal protein L13</fullName>
    </alternativeName>
</protein>
<gene>
    <name evidence="1" type="primary">rplM</name>
    <name type="ordered locus">Bcenmc03_0646</name>
</gene>
<keyword id="KW-0687">Ribonucleoprotein</keyword>
<keyword id="KW-0689">Ribosomal protein</keyword>
<comment type="function">
    <text evidence="1">This protein is one of the early assembly proteins of the 50S ribosomal subunit, although it is not seen to bind rRNA by itself. It is important during the early stages of 50S assembly.</text>
</comment>
<comment type="subunit">
    <text evidence="1">Part of the 50S ribosomal subunit.</text>
</comment>
<comment type="similarity">
    <text evidence="1">Belongs to the universal ribosomal protein uL13 family.</text>
</comment>
<feature type="chain" id="PRO_1000144099" description="Large ribosomal subunit protein uL13">
    <location>
        <begin position="1"/>
        <end position="142"/>
    </location>
</feature>
<organism>
    <name type="scientific">Burkholderia orbicola (strain MC0-3)</name>
    <dbReference type="NCBI Taxonomy" id="406425"/>
    <lineage>
        <taxon>Bacteria</taxon>
        <taxon>Pseudomonadati</taxon>
        <taxon>Pseudomonadota</taxon>
        <taxon>Betaproteobacteria</taxon>
        <taxon>Burkholderiales</taxon>
        <taxon>Burkholderiaceae</taxon>
        <taxon>Burkholderia</taxon>
        <taxon>Burkholderia cepacia complex</taxon>
        <taxon>Burkholderia orbicola</taxon>
    </lineage>
</organism>